<name>PURA_FRAP2</name>
<sequence>MSNIVIVGAQWGDEGKGKIADTLAEKSDLVVRYQGGNNAGHTLVVNGKKTFLHLIPSGVLHKHTKCVIGHGVVVDPIALDTEITRLQDTGIEISANNLFVSESCTVITSYHKLLDAVRENSTTEKIGTTGKGIGPAYEDKVSRKGIKFKHLFDKDVLRSRLALSLAEKETLFKDLYKVEYPSLEEEFERLYTLGQKLKQYSADTFSIIDQAVSTGKNVVYEGAQGVLLDIDYGTYPFVTSSNTSVAGVYSGATTAGHNLDHVIGITKAYTTRVGEGPFPTELFDDTGLFIQKKGGEIGVTTGRIRRCGWLDLPLLKYSAKCSNLTSIALTKVDVLSDLDTLKICIGYKYEGKEIFCAYPGIDLYKVEPILVDMEPFSLDEVVTKENMPSALKTYLRTIENHIGIPISSLAYGPSREQILFFEDYFKKG</sequence>
<comment type="function">
    <text evidence="1">Plays an important role in the de novo pathway of purine nucleotide biosynthesis. Catalyzes the first committed step in the biosynthesis of AMP from IMP.</text>
</comment>
<comment type="catalytic activity">
    <reaction evidence="1">
        <text>IMP + L-aspartate + GTP = N(6)-(1,2-dicarboxyethyl)-AMP + GDP + phosphate + 2 H(+)</text>
        <dbReference type="Rhea" id="RHEA:15753"/>
        <dbReference type="ChEBI" id="CHEBI:15378"/>
        <dbReference type="ChEBI" id="CHEBI:29991"/>
        <dbReference type="ChEBI" id="CHEBI:37565"/>
        <dbReference type="ChEBI" id="CHEBI:43474"/>
        <dbReference type="ChEBI" id="CHEBI:57567"/>
        <dbReference type="ChEBI" id="CHEBI:58053"/>
        <dbReference type="ChEBI" id="CHEBI:58189"/>
        <dbReference type="EC" id="6.3.4.4"/>
    </reaction>
</comment>
<comment type="cofactor">
    <cofactor evidence="1">
        <name>Mg(2+)</name>
        <dbReference type="ChEBI" id="CHEBI:18420"/>
    </cofactor>
    <text evidence="1">Binds 1 Mg(2+) ion per subunit.</text>
</comment>
<comment type="pathway">
    <text evidence="1">Purine metabolism; AMP biosynthesis via de novo pathway; AMP from IMP: step 1/2.</text>
</comment>
<comment type="subunit">
    <text evidence="1">Homodimer.</text>
</comment>
<comment type="subcellular location">
    <subcellularLocation>
        <location evidence="1">Cytoplasm</location>
    </subcellularLocation>
</comment>
<comment type="similarity">
    <text evidence="1">Belongs to the adenylosuccinate synthetase family.</text>
</comment>
<keyword id="KW-0963">Cytoplasm</keyword>
<keyword id="KW-0342">GTP-binding</keyword>
<keyword id="KW-0436">Ligase</keyword>
<keyword id="KW-0460">Magnesium</keyword>
<keyword id="KW-0479">Metal-binding</keyword>
<keyword id="KW-0547">Nucleotide-binding</keyword>
<keyword id="KW-0658">Purine biosynthesis</keyword>
<gene>
    <name evidence="1" type="primary">purA</name>
    <name type="ordered locus">Fphi_0647</name>
</gene>
<dbReference type="EC" id="6.3.4.4" evidence="1"/>
<dbReference type="EMBL" id="CP000937">
    <property type="protein sequence ID" value="ABZ86866.1"/>
    <property type="molecule type" value="Genomic_DNA"/>
</dbReference>
<dbReference type="SMR" id="B0TVV8"/>
<dbReference type="KEGG" id="fph:Fphi_0647"/>
<dbReference type="eggNOG" id="COG0104">
    <property type="taxonomic scope" value="Bacteria"/>
</dbReference>
<dbReference type="HOGENOM" id="CLU_029848_0_0_6"/>
<dbReference type="UniPathway" id="UPA00075">
    <property type="reaction ID" value="UER00335"/>
</dbReference>
<dbReference type="GO" id="GO:0005737">
    <property type="term" value="C:cytoplasm"/>
    <property type="evidence" value="ECO:0007669"/>
    <property type="project" value="UniProtKB-SubCell"/>
</dbReference>
<dbReference type="GO" id="GO:0004019">
    <property type="term" value="F:adenylosuccinate synthase activity"/>
    <property type="evidence" value="ECO:0007669"/>
    <property type="project" value="UniProtKB-UniRule"/>
</dbReference>
<dbReference type="GO" id="GO:0005525">
    <property type="term" value="F:GTP binding"/>
    <property type="evidence" value="ECO:0007669"/>
    <property type="project" value="UniProtKB-UniRule"/>
</dbReference>
<dbReference type="GO" id="GO:0000287">
    <property type="term" value="F:magnesium ion binding"/>
    <property type="evidence" value="ECO:0007669"/>
    <property type="project" value="UniProtKB-UniRule"/>
</dbReference>
<dbReference type="GO" id="GO:0044208">
    <property type="term" value="P:'de novo' AMP biosynthetic process"/>
    <property type="evidence" value="ECO:0007669"/>
    <property type="project" value="UniProtKB-UniRule"/>
</dbReference>
<dbReference type="GO" id="GO:0046040">
    <property type="term" value="P:IMP metabolic process"/>
    <property type="evidence" value="ECO:0007669"/>
    <property type="project" value="TreeGrafter"/>
</dbReference>
<dbReference type="CDD" id="cd03108">
    <property type="entry name" value="AdSS"/>
    <property type="match status" value="1"/>
</dbReference>
<dbReference type="FunFam" id="1.10.300.10:FF:000001">
    <property type="entry name" value="Adenylosuccinate synthetase"/>
    <property type="match status" value="1"/>
</dbReference>
<dbReference type="FunFam" id="3.90.170.10:FF:000001">
    <property type="entry name" value="Adenylosuccinate synthetase"/>
    <property type="match status" value="1"/>
</dbReference>
<dbReference type="Gene3D" id="3.40.440.10">
    <property type="entry name" value="Adenylosuccinate Synthetase, subunit A, domain 1"/>
    <property type="match status" value="1"/>
</dbReference>
<dbReference type="Gene3D" id="1.10.300.10">
    <property type="entry name" value="Adenylosuccinate Synthetase, subunit A, domain 2"/>
    <property type="match status" value="1"/>
</dbReference>
<dbReference type="Gene3D" id="3.90.170.10">
    <property type="entry name" value="Adenylosuccinate Synthetase, subunit A, domain 3"/>
    <property type="match status" value="1"/>
</dbReference>
<dbReference type="HAMAP" id="MF_00011">
    <property type="entry name" value="Adenylosucc_synth"/>
    <property type="match status" value="1"/>
</dbReference>
<dbReference type="InterPro" id="IPR018220">
    <property type="entry name" value="Adenylosuccin_syn_GTP-bd"/>
</dbReference>
<dbReference type="InterPro" id="IPR033128">
    <property type="entry name" value="Adenylosuccin_syn_Lys_AS"/>
</dbReference>
<dbReference type="InterPro" id="IPR042109">
    <property type="entry name" value="Adenylosuccinate_synth_dom1"/>
</dbReference>
<dbReference type="InterPro" id="IPR042110">
    <property type="entry name" value="Adenylosuccinate_synth_dom2"/>
</dbReference>
<dbReference type="InterPro" id="IPR042111">
    <property type="entry name" value="Adenylosuccinate_synth_dom3"/>
</dbReference>
<dbReference type="InterPro" id="IPR001114">
    <property type="entry name" value="Adenylosuccinate_synthetase"/>
</dbReference>
<dbReference type="InterPro" id="IPR027417">
    <property type="entry name" value="P-loop_NTPase"/>
</dbReference>
<dbReference type="NCBIfam" id="NF002223">
    <property type="entry name" value="PRK01117.1"/>
    <property type="match status" value="1"/>
</dbReference>
<dbReference type="NCBIfam" id="TIGR00184">
    <property type="entry name" value="purA"/>
    <property type="match status" value="1"/>
</dbReference>
<dbReference type="PANTHER" id="PTHR11846">
    <property type="entry name" value="ADENYLOSUCCINATE SYNTHETASE"/>
    <property type="match status" value="1"/>
</dbReference>
<dbReference type="PANTHER" id="PTHR11846:SF0">
    <property type="entry name" value="ADENYLOSUCCINATE SYNTHETASE"/>
    <property type="match status" value="1"/>
</dbReference>
<dbReference type="Pfam" id="PF00709">
    <property type="entry name" value="Adenylsucc_synt"/>
    <property type="match status" value="1"/>
</dbReference>
<dbReference type="SMART" id="SM00788">
    <property type="entry name" value="Adenylsucc_synt"/>
    <property type="match status" value="1"/>
</dbReference>
<dbReference type="SUPFAM" id="SSF52540">
    <property type="entry name" value="P-loop containing nucleoside triphosphate hydrolases"/>
    <property type="match status" value="1"/>
</dbReference>
<dbReference type="PROSITE" id="PS01266">
    <property type="entry name" value="ADENYLOSUCCIN_SYN_1"/>
    <property type="match status" value="1"/>
</dbReference>
<dbReference type="PROSITE" id="PS00513">
    <property type="entry name" value="ADENYLOSUCCIN_SYN_2"/>
    <property type="match status" value="1"/>
</dbReference>
<reference key="1">
    <citation type="submission" date="2007-12" db="EMBL/GenBank/DDBJ databases">
        <title>Complete sequence of chromosome of Francisella philomiragia subsp. philomiragia ATCC 25017.</title>
        <authorList>
            <consortium name="US DOE Joint Genome Institute"/>
            <person name="Copeland A."/>
            <person name="Lucas S."/>
            <person name="Lapidus A."/>
            <person name="Barry K."/>
            <person name="Detter J.C."/>
            <person name="Glavina del Rio T."/>
            <person name="Hammon N."/>
            <person name="Israni S."/>
            <person name="Dalin E."/>
            <person name="Tice H."/>
            <person name="Pitluck S."/>
            <person name="Chain P."/>
            <person name="Malfatti S."/>
            <person name="Shin M."/>
            <person name="Vergez L."/>
            <person name="Schmutz J."/>
            <person name="Larimer F."/>
            <person name="Land M."/>
            <person name="Hauser L."/>
            <person name="Richardson P."/>
        </authorList>
    </citation>
    <scope>NUCLEOTIDE SEQUENCE [LARGE SCALE GENOMIC DNA]</scope>
    <source>
        <strain>ATCC 25017 / CCUG 19701 / FSC 153 / O#319-036</strain>
    </source>
</reference>
<proteinExistence type="inferred from homology"/>
<feature type="chain" id="PRO_1000073946" description="Adenylosuccinate synthetase">
    <location>
        <begin position="1"/>
        <end position="428"/>
    </location>
</feature>
<feature type="active site" description="Proton acceptor" evidence="1">
    <location>
        <position position="13"/>
    </location>
</feature>
<feature type="active site" description="Proton donor" evidence="1">
    <location>
        <position position="41"/>
    </location>
</feature>
<feature type="binding site" evidence="1">
    <location>
        <begin position="12"/>
        <end position="18"/>
    </location>
    <ligand>
        <name>GTP</name>
        <dbReference type="ChEBI" id="CHEBI:37565"/>
    </ligand>
</feature>
<feature type="binding site" description="in other chain" evidence="1">
    <location>
        <begin position="13"/>
        <end position="16"/>
    </location>
    <ligand>
        <name>IMP</name>
        <dbReference type="ChEBI" id="CHEBI:58053"/>
        <note>ligand shared between dimeric partners</note>
    </ligand>
</feature>
<feature type="binding site" evidence="1">
    <location>
        <position position="13"/>
    </location>
    <ligand>
        <name>Mg(2+)</name>
        <dbReference type="ChEBI" id="CHEBI:18420"/>
    </ligand>
</feature>
<feature type="binding site" description="in other chain" evidence="1">
    <location>
        <begin position="38"/>
        <end position="41"/>
    </location>
    <ligand>
        <name>IMP</name>
        <dbReference type="ChEBI" id="CHEBI:58053"/>
        <note>ligand shared between dimeric partners</note>
    </ligand>
</feature>
<feature type="binding site" evidence="1">
    <location>
        <begin position="40"/>
        <end position="42"/>
    </location>
    <ligand>
        <name>GTP</name>
        <dbReference type="ChEBI" id="CHEBI:37565"/>
    </ligand>
</feature>
<feature type="binding site" evidence="1">
    <location>
        <position position="40"/>
    </location>
    <ligand>
        <name>Mg(2+)</name>
        <dbReference type="ChEBI" id="CHEBI:18420"/>
    </ligand>
</feature>
<feature type="binding site" description="in other chain" evidence="1">
    <location>
        <position position="129"/>
    </location>
    <ligand>
        <name>IMP</name>
        <dbReference type="ChEBI" id="CHEBI:58053"/>
        <note>ligand shared between dimeric partners</note>
    </ligand>
</feature>
<feature type="binding site" evidence="1">
    <location>
        <position position="143"/>
    </location>
    <ligand>
        <name>IMP</name>
        <dbReference type="ChEBI" id="CHEBI:58053"/>
        <note>ligand shared between dimeric partners</note>
    </ligand>
</feature>
<feature type="binding site" description="in other chain" evidence="1">
    <location>
        <position position="224"/>
    </location>
    <ligand>
        <name>IMP</name>
        <dbReference type="ChEBI" id="CHEBI:58053"/>
        <note>ligand shared between dimeric partners</note>
    </ligand>
</feature>
<feature type="binding site" description="in other chain" evidence="1">
    <location>
        <position position="239"/>
    </location>
    <ligand>
        <name>IMP</name>
        <dbReference type="ChEBI" id="CHEBI:58053"/>
        <note>ligand shared between dimeric partners</note>
    </ligand>
</feature>
<feature type="binding site" evidence="1">
    <location>
        <begin position="299"/>
        <end position="305"/>
    </location>
    <ligand>
        <name>substrate</name>
    </ligand>
</feature>
<feature type="binding site" description="in other chain" evidence="1">
    <location>
        <position position="303"/>
    </location>
    <ligand>
        <name>IMP</name>
        <dbReference type="ChEBI" id="CHEBI:58053"/>
        <note>ligand shared between dimeric partners</note>
    </ligand>
</feature>
<feature type="binding site" evidence="1">
    <location>
        <position position="305"/>
    </location>
    <ligand>
        <name>GTP</name>
        <dbReference type="ChEBI" id="CHEBI:37565"/>
    </ligand>
</feature>
<feature type="binding site" evidence="1">
    <location>
        <begin position="331"/>
        <end position="333"/>
    </location>
    <ligand>
        <name>GTP</name>
        <dbReference type="ChEBI" id="CHEBI:37565"/>
    </ligand>
</feature>
<feature type="binding site" evidence="1">
    <location>
        <begin position="410"/>
        <end position="412"/>
    </location>
    <ligand>
        <name>GTP</name>
        <dbReference type="ChEBI" id="CHEBI:37565"/>
    </ligand>
</feature>
<accession>B0TVV8</accession>
<protein>
    <recommendedName>
        <fullName evidence="1">Adenylosuccinate synthetase</fullName>
        <shortName evidence="1">AMPSase</shortName>
        <shortName evidence="1">AdSS</shortName>
        <ecNumber evidence="1">6.3.4.4</ecNumber>
    </recommendedName>
    <alternativeName>
        <fullName evidence="1">IMP--aspartate ligase</fullName>
    </alternativeName>
</protein>
<organism>
    <name type="scientific">Francisella philomiragia subsp. philomiragia (strain ATCC 25017 / CCUG 19701 / FSC 153 / O#319-036)</name>
    <dbReference type="NCBI Taxonomy" id="484022"/>
    <lineage>
        <taxon>Bacteria</taxon>
        <taxon>Pseudomonadati</taxon>
        <taxon>Pseudomonadota</taxon>
        <taxon>Gammaproteobacteria</taxon>
        <taxon>Thiotrichales</taxon>
        <taxon>Francisellaceae</taxon>
        <taxon>Francisella</taxon>
    </lineage>
</organism>
<evidence type="ECO:0000255" key="1">
    <source>
        <dbReference type="HAMAP-Rule" id="MF_00011"/>
    </source>
</evidence>